<sequence>MKMTLIAILTCAAVLVLHITAAEELEAESQLMEVGMPDTELEAVDEERLFECSVSCEIEKEGNKDCKKKKCKGGWKCKFNMCVKV</sequence>
<accession>D2Y207</accession>
<reference key="1">
    <citation type="journal article" date="2010" name="J. Proteome Res.">
        <title>Molecular diversification of peptide toxins from the tarantula Haplopelma hainanum (Ornithoctonus hainana) venom based on transcriptomic, peptidomic, and genomic analyses.</title>
        <authorList>
            <person name="Tang X."/>
            <person name="Zhang Y."/>
            <person name="Hu W."/>
            <person name="Xu D."/>
            <person name="Tao H."/>
            <person name="Yang X."/>
            <person name="Li Y."/>
            <person name="Jiang L."/>
            <person name="Liang S."/>
        </authorList>
    </citation>
    <scope>NUCLEOTIDE SEQUENCE [LARGE SCALE MRNA]</scope>
    <scope>PROTEIN SEQUENCE OF 49-85</scope>
    <scope>IDENTIFICATION BY MASS SPECTROMETRY</scope>
    <source>
        <tissue>Venom</tissue>
        <tissue>Venom gland</tissue>
    </source>
</reference>
<reference key="2">
    <citation type="journal article" date="2010" name="Dong Wu Xue Yan Jiu">
        <title>Isolation and characterization of Hainantoxin-II, a new neurotoxic peptide from the Chinese bird spider (Haplopelma hainanum).</title>
        <authorList>
            <person name="Pan J.Y."/>
            <person name="Yu Z.Q."/>
        </authorList>
    </citation>
    <scope>PROTEIN SEQUENCE OF 49-85</scope>
    <scope>FUNCTION</scope>
    <scope>MASS SPECTROMETRY</scope>
    <scope>TOXIC DOSE</scope>
    <source>
        <tissue>Venom</tissue>
    </source>
</reference>
<evidence type="ECO:0000250" key="1"/>
<evidence type="ECO:0000255" key="2"/>
<evidence type="ECO:0000269" key="3">
    <source>
    </source>
</evidence>
<evidence type="ECO:0000269" key="4">
    <source>
    </source>
</evidence>
<evidence type="ECO:0000305" key="5"/>
<feature type="signal peptide" evidence="2">
    <location>
        <begin position="1"/>
        <end position="22"/>
    </location>
</feature>
<feature type="propeptide" id="PRO_0000400725" evidence="3 4">
    <location>
        <begin position="23"/>
        <end position="48"/>
    </location>
</feature>
<feature type="peptide" id="PRO_0000400726" description="U4-theraphotoxin-Hhn1a">
    <location>
        <begin position="49"/>
        <end position="85"/>
    </location>
</feature>
<feature type="disulfide bond" evidence="1">
    <location>
        <begin position="52"/>
        <end position="66"/>
    </location>
</feature>
<feature type="disulfide bond" evidence="1">
    <location>
        <begin position="56"/>
        <end position="77"/>
    </location>
</feature>
<feature type="disulfide bond" evidence="1">
    <location>
        <begin position="71"/>
        <end position="82"/>
    </location>
</feature>
<protein>
    <recommendedName>
        <fullName>U4-theraphotoxin-Hhn1a</fullName>
        <shortName>U4-TRTX-Hhn1a</shortName>
    </recommendedName>
    <alternativeName>
        <fullName>Hainantoxin-II.4</fullName>
        <shortName>HNTX-II.4</shortName>
    </alternativeName>
    <alternativeName>
        <fullName>Peptide F8-20.15</fullName>
    </alternativeName>
</protein>
<comment type="function">
    <text evidence="4">Neurotoxin active on both insects and mammals.</text>
</comment>
<comment type="subunit">
    <text>Monomer.</text>
</comment>
<comment type="subcellular location">
    <subcellularLocation>
        <location>Secreted</location>
    </subcellularLocation>
</comment>
<comment type="tissue specificity">
    <text>Expressed by the venom gland.</text>
</comment>
<comment type="mass spectrometry"/>
<comment type="toxic dose">
    <text evidence="4">LD(50) is 1.41 mg/kg by intracerebroventricular injection into mice.</text>
</comment>
<comment type="toxic dose">
    <text evidence="4">PD(50) is 16 mg/kg in cockroaches.</text>
</comment>
<comment type="similarity">
    <text evidence="5">Belongs to the neurotoxin 12 (Hwtx-2) family. 02 (Hwtx-2) subfamily.</text>
</comment>
<keyword id="KW-0903">Direct protein sequencing</keyword>
<keyword id="KW-1015">Disulfide bond</keyword>
<keyword id="KW-0528">Neurotoxin</keyword>
<keyword id="KW-0629">Postsynaptic neurotoxin</keyword>
<keyword id="KW-0964">Secreted</keyword>
<keyword id="KW-0732">Signal</keyword>
<keyword id="KW-0800">Toxin</keyword>
<proteinExistence type="evidence at protein level"/>
<name>H2A04_CYRHA</name>
<organism>
    <name type="scientific">Cyriopagopus hainanus</name>
    <name type="common">Chinese bird spider</name>
    <name type="synonym">Haplopelma hainanum</name>
    <dbReference type="NCBI Taxonomy" id="209901"/>
    <lineage>
        <taxon>Eukaryota</taxon>
        <taxon>Metazoa</taxon>
        <taxon>Ecdysozoa</taxon>
        <taxon>Arthropoda</taxon>
        <taxon>Chelicerata</taxon>
        <taxon>Arachnida</taxon>
        <taxon>Araneae</taxon>
        <taxon>Mygalomorphae</taxon>
        <taxon>Theraphosidae</taxon>
        <taxon>Haplopelma</taxon>
    </lineage>
</organism>
<dbReference type="EMBL" id="GU292884">
    <property type="protein sequence ID" value="ADB56700.1"/>
    <property type="molecule type" value="mRNA"/>
</dbReference>
<dbReference type="SMR" id="D2Y207"/>
<dbReference type="ArachnoServer" id="AS001783">
    <property type="toxin name" value="U4-theraphotoxin-Hhn1a"/>
</dbReference>
<dbReference type="GO" id="GO:0005576">
    <property type="term" value="C:extracellular region"/>
    <property type="evidence" value="ECO:0007669"/>
    <property type="project" value="UniProtKB-SubCell"/>
</dbReference>
<dbReference type="GO" id="GO:0035792">
    <property type="term" value="C:host cell postsynaptic membrane"/>
    <property type="evidence" value="ECO:0007669"/>
    <property type="project" value="UniProtKB-KW"/>
</dbReference>
<dbReference type="GO" id="GO:0090729">
    <property type="term" value="F:toxin activity"/>
    <property type="evidence" value="ECO:0007669"/>
    <property type="project" value="UniProtKB-KW"/>
</dbReference>
<dbReference type="InterPro" id="IPR012625">
    <property type="entry name" value="Hwtx-2-like"/>
</dbReference>
<dbReference type="Pfam" id="PF08089">
    <property type="entry name" value="Toxin_20"/>
    <property type="match status" value="1"/>
</dbReference>
<dbReference type="SUPFAM" id="SSF57059">
    <property type="entry name" value="omega toxin-like"/>
    <property type="match status" value="1"/>
</dbReference>
<dbReference type="PROSITE" id="PS60022">
    <property type="entry name" value="HWTX_2"/>
    <property type="match status" value="1"/>
</dbReference>